<protein>
    <recommendedName>
        <fullName evidence="1">Spermidine export protein MdtJ</fullName>
    </recommendedName>
</protein>
<name>MDTJ_SALPB</name>
<feature type="chain" id="PRO_0000331176" description="Spermidine export protein MdtJ">
    <location>
        <begin position="1"/>
        <end position="120"/>
    </location>
</feature>
<feature type="transmembrane region" description="Helical" evidence="1">
    <location>
        <begin position="1"/>
        <end position="21"/>
    </location>
</feature>
<feature type="transmembrane region" description="Helical" evidence="1">
    <location>
        <begin position="31"/>
        <end position="51"/>
    </location>
</feature>
<feature type="transmembrane region" description="Helical" evidence="1">
    <location>
        <begin position="54"/>
        <end position="74"/>
    </location>
</feature>
<feature type="transmembrane region" description="Helical" evidence="1">
    <location>
        <begin position="81"/>
        <end position="101"/>
    </location>
</feature>
<comment type="function">
    <text evidence="1">Catalyzes the excretion of spermidine.</text>
</comment>
<comment type="subunit">
    <text evidence="1">Forms a complex with MdtI.</text>
</comment>
<comment type="subcellular location">
    <subcellularLocation>
        <location evidence="1">Cell inner membrane</location>
        <topology evidence="1">Multi-pass membrane protein</topology>
    </subcellularLocation>
</comment>
<comment type="similarity">
    <text evidence="1">Belongs to the drug/metabolite transporter (DMT) superfamily. Small multidrug resistance (SMR) (TC 2.A.7.1) family. MdtJ subfamily.</text>
</comment>
<accession>A9MZZ3</accession>
<dbReference type="EMBL" id="CP000886">
    <property type="protein sequence ID" value="ABX67224.1"/>
    <property type="molecule type" value="Genomic_DNA"/>
</dbReference>
<dbReference type="RefSeq" id="WP_000500278.1">
    <property type="nucleotide sequence ID" value="NC_010102.1"/>
</dbReference>
<dbReference type="SMR" id="A9MZZ3"/>
<dbReference type="KEGG" id="spq:SPAB_01831"/>
<dbReference type="PATRIC" id="fig|1016998.12.peg.1726"/>
<dbReference type="HOGENOM" id="CLU_133067_0_0_6"/>
<dbReference type="BioCyc" id="SENT1016998:SPAB_RS07430-MONOMER"/>
<dbReference type="Proteomes" id="UP000008556">
    <property type="component" value="Chromosome"/>
</dbReference>
<dbReference type="GO" id="GO:0005886">
    <property type="term" value="C:plasma membrane"/>
    <property type="evidence" value="ECO:0007669"/>
    <property type="project" value="UniProtKB-SubCell"/>
</dbReference>
<dbReference type="GO" id="GO:0015199">
    <property type="term" value="F:amino-acid betaine transmembrane transporter activity"/>
    <property type="evidence" value="ECO:0007669"/>
    <property type="project" value="TreeGrafter"/>
</dbReference>
<dbReference type="GO" id="GO:0015297">
    <property type="term" value="F:antiporter activity"/>
    <property type="evidence" value="ECO:0007669"/>
    <property type="project" value="TreeGrafter"/>
</dbReference>
<dbReference type="GO" id="GO:0015220">
    <property type="term" value="F:choline transmembrane transporter activity"/>
    <property type="evidence" value="ECO:0007669"/>
    <property type="project" value="TreeGrafter"/>
</dbReference>
<dbReference type="GO" id="GO:0015606">
    <property type="term" value="F:spermidine transmembrane transporter activity"/>
    <property type="evidence" value="ECO:0007669"/>
    <property type="project" value="UniProtKB-UniRule"/>
</dbReference>
<dbReference type="GO" id="GO:0031460">
    <property type="term" value="P:glycine betaine transport"/>
    <property type="evidence" value="ECO:0007669"/>
    <property type="project" value="TreeGrafter"/>
</dbReference>
<dbReference type="FunFam" id="1.10.3730.20:FF:000001">
    <property type="entry name" value="Quaternary ammonium compound resistance transporter SugE"/>
    <property type="match status" value="1"/>
</dbReference>
<dbReference type="Gene3D" id="1.10.3730.20">
    <property type="match status" value="1"/>
</dbReference>
<dbReference type="HAMAP" id="MF_01598">
    <property type="entry name" value="MdtJ"/>
    <property type="match status" value="1"/>
</dbReference>
<dbReference type="InterPro" id="IPR000390">
    <property type="entry name" value="Small_drug/metabolite_transptr"/>
</dbReference>
<dbReference type="InterPro" id="IPR045324">
    <property type="entry name" value="Small_multidrug_res"/>
</dbReference>
<dbReference type="InterPro" id="IPR023740">
    <property type="entry name" value="Spermidine_export_MdtJ"/>
</dbReference>
<dbReference type="NCBIfam" id="NF007767">
    <property type="entry name" value="PRK10452.1"/>
    <property type="match status" value="1"/>
</dbReference>
<dbReference type="PANTHER" id="PTHR30561">
    <property type="entry name" value="SMR FAMILY PROTON-DEPENDENT DRUG EFFLUX TRANSPORTER SUGE"/>
    <property type="match status" value="1"/>
</dbReference>
<dbReference type="PANTHER" id="PTHR30561:SF2">
    <property type="entry name" value="SPERMIDINE EXPORT PROTEIN MDTJ"/>
    <property type="match status" value="1"/>
</dbReference>
<dbReference type="Pfam" id="PF00893">
    <property type="entry name" value="Multi_Drug_Res"/>
    <property type="match status" value="1"/>
</dbReference>
<dbReference type="SUPFAM" id="SSF103481">
    <property type="entry name" value="Multidrug resistance efflux transporter EmrE"/>
    <property type="match status" value="1"/>
</dbReference>
<keyword id="KW-0997">Cell inner membrane</keyword>
<keyword id="KW-1003">Cell membrane</keyword>
<keyword id="KW-0472">Membrane</keyword>
<keyword id="KW-0812">Transmembrane</keyword>
<keyword id="KW-1133">Transmembrane helix</keyword>
<keyword id="KW-0813">Transport</keyword>
<reference key="1">
    <citation type="submission" date="2007-11" db="EMBL/GenBank/DDBJ databases">
        <authorList>
            <consortium name="The Salmonella enterica serovar Paratyphi B Genome Sequencing Project"/>
            <person name="McClelland M."/>
            <person name="Sanderson E.K."/>
            <person name="Porwollik S."/>
            <person name="Spieth J."/>
            <person name="Clifton W.S."/>
            <person name="Fulton R."/>
            <person name="Cordes M."/>
            <person name="Wollam A."/>
            <person name="Shah N."/>
            <person name="Pepin K."/>
            <person name="Bhonagiri V."/>
            <person name="Nash W."/>
            <person name="Johnson M."/>
            <person name="Thiruvilangam P."/>
            <person name="Wilson R."/>
        </authorList>
    </citation>
    <scope>NUCLEOTIDE SEQUENCE [LARGE SCALE GENOMIC DNA]</scope>
    <source>
        <strain>ATCC BAA-1250 / SPB7</strain>
    </source>
</reference>
<sequence length="120" mass="12915">MFYWILLALAIATEITGTLSMKWASVGNGNAGFILMLVMITLSYIFLSFAVKKIALGVAYALWEGIGILFITIFSVLLFDEALSTMKIAGLLTLVAGIVLIKSGTRKPGKPVKEATRATI</sequence>
<organism>
    <name type="scientific">Salmonella paratyphi B (strain ATCC BAA-1250 / SPB7)</name>
    <dbReference type="NCBI Taxonomy" id="1016998"/>
    <lineage>
        <taxon>Bacteria</taxon>
        <taxon>Pseudomonadati</taxon>
        <taxon>Pseudomonadota</taxon>
        <taxon>Gammaproteobacteria</taxon>
        <taxon>Enterobacterales</taxon>
        <taxon>Enterobacteriaceae</taxon>
        <taxon>Salmonella</taxon>
    </lineage>
</organism>
<evidence type="ECO:0000255" key="1">
    <source>
        <dbReference type="HAMAP-Rule" id="MF_01598"/>
    </source>
</evidence>
<gene>
    <name evidence="1" type="primary">mdtJ</name>
    <name type="ordered locus">SPAB_01831</name>
</gene>
<proteinExistence type="inferred from homology"/>